<name>SC241_CANGA</name>
<protein>
    <recommendedName>
        <fullName>Protein transport protein SEC24-1</fullName>
    </recommendedName>
</protein>
<feature type="chain" id="PRO_0000295482" description="Protein transport protein SEC24-1">
    <location>
        <begin position="1"/>
        <end position="897"/>
    </location>
</feature>
<feature type="region of interest" description="Zinc finger-like">
    <location>
        <begin position="213"/>
        <end position="238"/>
    </location>
</feature>
<feature type="binding site" evidence="1">
    <location>
        <position position="213"/>
    </location>
    <ligand>
        <name>Zn(2+)</name>
        <dbReference type="ChEBI" id="CHEBI:29105"/>
    </ligand>
</feature>
<feature type="binding site" evidence="1">
    <location>
        <position position="216"/>
    </location>
    <ligand>
        <name>Zn(2+)</name>
        <dbReference type="ChEBI" id="CHEBI:29105"/>
    </ligand>
</feature>
<feature type="binding site" evidence="1">
    <location>
        <position position="235"/>
    </location>
    <ligand>
        <name>Zn(2+)</name>
        <dbReference type="ChEBI" id="CHEBI:29105"/>
    </ligand>
</feature>
<feature type="binding site" evidence="1">
    <location>
        <position position="238"/>
    </location>
    <ligand>
        <name>Zn(2+)</name>
        <dbReference type="ChEBI" id="CHEBI:29105"/>
    </ligand>
</feature>
<evidence type="ECO:0000250" key="1"/>
<evidence type="ECO:0000305" key="2"/>
<keyword id="KW-0963">Cytoplasm</keyword>
<keyword id="KW-0968">Cytoplasmic vesicle</keyword>
<keyword id="KW-0256">Endoplasmic reticulum</keyword>
<keyword id="KW-0931">ER-Golgi transport</keyword>
<keyword id="KW-0333">Golgi apparatus</keyword>
<keyword id="KW-0472">Membrane</keyword>
<keyword id="KW-0479">Metal-binding</keyword>
<keyword id="KW-0653">Protein transport</keyword>
<keyword id="KW-1185">Reference proteome</keyword>
<keyword id="KW-0813">Transport</keyword>
<keyword id="KW-0862">Zinc</keyword>
<organism>
    <name type="scientific">Candida glabrata (strain ATCC 2001 / BCRC 20586 / JCM 3761 / NBRC 0622 / NRRL Y-65 / CBS 138)</name>
    <name type="common">Yeast</name>
    <name type="synonym">Nakaseomyces glabratus</name>
    <dbReference type="NCBI Taxonomy" id="284593"/>
    <lineage>
        <taxon>Eukaryota</taxon>
        <taxon>Fungi</taxon>
        <taxon>Dikarya</taxon>
        <taxon>Ascomycota</taxon>
        <taxon>Saccharomycotina</taxon>
        <taxon>Saccharomycetes</taxon>
        <taxon>Saccharomycetales</taxon>
        <taxon>Saccharomycetaceae</taxon>
        <taxon>Nakaseomyces</taxon>
    </lineage>
</organism>
<dbReference type="EMBL" id="CR380949">
    <property type="protein sequence ID" value="CAG58139.1"/>
    <property type="molecule type" value="Genomic_DNA"/>
</dbReference>
<dbReference type="RefSeq" id="XP_445233.1">
    <property type="nucleotide sequence ID" value="XM_445233.1"/>
</dbReference>
<dbReference type="SMR" id="Q6FX11"/>
<dbReference type="STRING" id="284593.Q6FX11"/>
<dbReference type="EnsemblFungi" id="CAGL0C01353g-T">
    <property type="protein sequence ID" value="CAGL0C01353g-T-p1"/>
    <property type="gene ID" value="CAGL0C01353g"/>
</dbReference>
<dbReference type="KEGG" id="cgr:2886812"/>
<dbReference type="CGD" id="CAL0127234">
    <property type="gene designation" value="CAGL0C01353g"/>
</dbReference>
<dbReference type="VEuPathDB" id="FungiDB:CAGL0C01353g"/>
<dbReference type="eggNOG" id="KOG1985">
    <property type="taxonomic scope" value="Eukaryota"/>
</dbReference>
<dbReference type="HOGENOM" id="CLU_004589_2_1_1"/>
<dbReference type="InParanoid" id="Q6FX11"/>
<dbReference type="OMA" id="CPANDYY"/>
<dbReference type="Proteomes" id="UP000002428">
    <property type="component" value="Chromosome C"/>
</dbReference>
<dbReference type="GO" id="GO:0030127">
    <property type="term" value="C:COPII vesicle coat"/>
    <property type="evidence" value="ECO:0007669"/>
    <property type="project" value="EnsemblFungi"/>
</dbReference>
<dbReference type="GO" id="GO:0070971">
    <property type="term" value="C:endoplasmic reticulum exit site"/>
    <property type="evidence" value="ECO:0007669"/>
    <property type="project" value="TreeGrafter"/>
</dbReference>
<dbReference type="GO" id="GO:0005789">
    <property type="term" value="C:endoplasmic reticulum membrane"/>
    <property type="evidence" value="ECO:0007669"/>
    <property type="project" value="UniProtKB-SubCell"/>
</dbReference>
<dbReference type="GO" id="GO:0000139">
    <property type="term" value="C:Golgi membrane"/>
    <property type="evidence" value="ECO:0007669"/>
    <property type="project" value="UniProtKB-SubCell"/>
</dbReference>
<dbReference type="GO" id="GO:0000149">
    <property type="term" value="F:SNARE binding"/>
    <property type="evidence" value="ECO:0007669"/>
    <property type="project" value="TreeGrafter"/>
</dbReference>
<dbReference type="GO" id="GO:0008270">
    <property type="term" value="F:zinc ion binding"/>
    <property type="evidence" value="ECO:0007669"/>
    <property type="project" value="InterPro"/>
</dbReference>
<dbReference type="GO" id="GO:0090110">
    <property type="term" value="P:COPII-coated vesicle cargo loading"/>
    <property type="evidence" value="ECO:0007669"/>
    <property type="project" value="EnsemblFungi"/>
</dbReference>
<dbReference type="GO" id="GO:0006886">
    <property type="term" value="P:intracellular protein transport"/>
    <property type="evidence" value="ECO:0007669"/>
    <property type="project" value="InterPro"/>
</dbReference>
<dbReference type="CDD" id="cd01479">
    <property type="entry name" value="Sec24-like"/>
    <property type="match status" value="1"/>
</dbReference>
<dbReference type="Gene3D" id="2.60.40.1670">
    <property type="entry name" value="beta-sandwich domain of Sec23/24"/>
    <property type="match status" value="1"/>
</dbReference>
<dbReference type="Gene3D" id="1.20.120.730">
    <property type="entry name" value="Sec23/Sec24 helical domain"/>
    <property type="match status" value="1"/>
</dbReference>
<dbReference type="Gene3D" id="3.40.20.10">
    <property type="entry name" value="Severin"/>
    <property type="match status" value="1"/>
</dbReference>
<dbReference type="Gene3D" id="3.40.50.410">
    <property type="entry name" value="von Willebrand factor, type A domain"/>
    <property type="match status" value="1"/>
</dbReference>
<dbReference type="Gene3D" id="2.30.30.380">
    <property type="entry name" value="Zn-finger domain of Sec23/24"/>
    <property type="match status" value="1"/>
</dbReference>
<dbReference type="InterPro" id="IPR029006">
    <property type="entry name" value="ADF-H/Gelsolin-like_dom_sf"/>
</dbReference>
<dbReference type="InterPro" id="IPR007123">
    <property type="entry name" value="Gelsolin-like_dom"/>
</dbReference>
<dbReference type="InterPro" id="IPR036180">
    <property type="entry name" value="Gelsolin-like_dom_sf"/>
</dbReference>
<dbReference type="InterPro" id="IPR006900">
    <property type="entry name" value="Sec23/24_helical_dom"/>
</dbReference>
<dbReference type="InterPro" id="IPR036175">
    <property type="entry name" value="Sec23/24_helical_dom_sf"/>
</dbReference>
<dbReference type="InterPro" id="IPR006896">
    <property type="entry name" value="Sec23/24_trunk_dom"/>
</dbReference>
<dbReference type="InterPro" id="IPR012990">
    <property type="entry name" value="Sec23_24_beta_S"/>
</dbReference>
<dbReference type="InterPro" id="IPR050550">
    <property type="entry name" value="SEC23_SEC24_subfamily"/>
</dbReference>
<dbReference type="InterPro" id="IPR041742">
    <property type="entry name" value="Sec24-like_trunk_dom"/>
</dbReference>
<dbReference type="InterPro" id="IPR036465">
    <property type="entry name" value="vWFA_dom_sf"/>
</dbReference>
<dbReference type="InterPro" id="IPR006895">
    <property type="entry name" value="Znf_Sec23_Sec24"/>
</dbReference>
<dbReference type="InterPro" id="IPR036174">
    <property type="entry name" value="Znf_Sec23_Sec24_sf"/>
</dbReference>
<dbReference type="PANTHER" id="PTHR13803">
    <property type="entry name" value="SEC24-RELATED PROTEIN"/>
    <property type="match status" value="1"/>
</dbReference>
<dbReference type="PANTHER" id="PTHR13803:SF39">
    <property type="entry name" value="SECRETORY 24AB, ISOFORM A"/>
    <property type="match status" value="1"/>
</dbReference>
<dbReference type="Pfam" id="PF00626">
    <property type="entry name" value="Gelsolin"/>
    <property type="match status" value="1"/>
</dbReference>
<dbReference type="Pfam" id="PF08033">
    <property type="entry name" value="Sec23_BS"/>
    <property type="match status" value="1"/>
</dbReference>
<dbReference type="Pfam" id="PF04815">
    <property type="entry name" value="Sec23_helical"/>
    <property type="match status" value="1"/>
</dbReference>
<dbReference type="Pfam" id="PF04811">
    <property type="entry name" value="Sec23_trunk"/>
    <property type="match status" value="1"/>
</dbReference>
<dbReference type="Pfam" id="PF04810">
    <property type="entry name" value="zf-Sec23_Sec24"/>
    <property type="match status" value="1"/>
</dbReference>
<dbReference type="SUPFAM" id="SSF81995">
    <property type="entry name" value="beta-sandwich domain of Sec23/24"/>
    <property type="match status" value="1"/>
</dbReference>
<dbReference type="SUPFAM" id="SSF82754">
    <property type="entry name" value="C-terminal, gelsolin-like domain of Sec23/24"/>
    <property type="match status" value="1"/>
</dbReference>
<dbReference type="SUPFAM" id="SSF81811">
    <property type="entry name" value="Helical domain of Sec23/24"/>
    <property type="match status" value="1"/>
</dbReference>
<dbReference type="SUPFAM" id="SSF53300">
    <property type="entry name" value="vWA-like"/>
    <property type="match status" value="1"/>
</dbReference>
<dbReference type="SUPFAM" id="SSF82919">
    <property type="entry name" value="Zn-finger domain of Sec23/24"/>
    <property type="match status" value="1"/>
</dbReference>
<gene>
    <name type="primary">SEC241</name>
    <name type="ordered locus">CAGL0C01353g</name>
</gene>
<sequence>MSHHKRRVYPQAQFGLAQAGQTGYQDVQQPGVLPSQANYQEPVPLVTPIQEVLNNQIDQTADSLHNMQLHNVPDFNQPLQGQLNGPQSPALYQNYNENGMNNYNAAFGNGGTSVKQVNQLYPIDLLSDLPPPIKDLGLPPPPINLSPDIMSVPSDKSNASPDYIRSTLNAVPKTNSLLKKTKLPFALVIKPYQHLNDDVNAPPLNEECLIVRCRRCRSYINPFAKFIEQGRRWRCNFCRLANDLPMQFDQSSIDTNIVNRLDRTEIKNAVMEYVAPKEYTVRPPPPSIYTFIIDVSQNAIKNGLFVSTIETLKQQLEYLPNRDNRTKISIILVDHALHILSIPADDVSNKFRILDVADIDEPYIPLPNSLVVSLSRCKQNVQLALEKIKQLFEINVSTKFALGPALRTAQKLIGGVGGKLIVISASLPNAGIGSLQRRNESGVSGTTKESSQLLSCQDSFYKTFTVECSKTQITIDLFLASDDYVDVATLSNLPRYTAGQTHFYPGYNASNISDFNKFTTEFSKHITMDISFETVMRARGSTGLKTSAFYGHFFNRSSDLCAFSTMPRDQSYVFDISIEDTITTDYCYFQVAVLLSLNNGQRRIRVITLALPTTQSISEVFACVDQQAVAAQITQRAVQKANSSSIDDARDLIQKTTLDILSTYKKELVVTNTGGVVPLKLSTNLRILPLLMHALMKHMAFRAGVVPSDHRAYSLNVLESVPIKSLITSIYPSIYSMHDMGDDCGYTDETGNVILPECINDTAILMEKYGLYLIDNGSELFLWVGGEAVPELLSDVFGVPEMSQVPVGKHDLFRVEGSQFNERVCNIIDQLRTSDDTTVYKTLYIVSGPTINDSFSQGTRELASLRMWAATAFVEDNIMKTLSYREFLEKMKKEVSK</sequence>
<comment type="function">
    <text evidence="1">Component of the coat protein complex II (COPII) which promotes the formation of transport vesicles from the endoplasmic reticulum (ER). The coat has two main functions, the physical deformation of the endoplasmic reticulum membrane into vesicles and the selection of cargo molecules (By similarity).</text>
</comment>
<comment type="subunit">
    <text evidence="1">The COPII coat is composed of at least 5 proteins: the SEC23/24 complex, the SEC13/31 complex, and the protein SAR1. Golgi apparatus membrane; Peripheral membrane protein; Cytoplasmic side.</text>
</comment>
<comment type="subcellular location">
    <subcellularLocation>
        <location evidence="1">Cytoplasm</location>
    </subcellularLocation>
    <subcellularLocation>
        <location evidence="1">Cytoplasmic vesicle</location>
        <location evidence="1">COPII-coated vesicle membrane</location>
        <topology evidence="1">Peripheral membrane protein</topology>
        <orientation evidence="1">Cytoplasmic side</orientation>
    </subcellularLocation>
    <subcellularLocation>
        <location evidence="1">Endoplasmic reticulum membrane</location>
        <topology evidence="1">Peripheral membrane protein</topology>
        <orientation evidence="1">Cytoplasmic side</orientation>
    </subcellularLocation>
    <subcellularLocation>
        <location evidence="1">Golgi apparatus membrane</location>
        <topology evidence="1">Peripheral membrane protein</topology>
        <orientation evidence="1">Cytoplasmic side</orientation>
    </subcellularLocation>
</comment>
<comment type="similarity">
    <text evidence="2">Belongs to the SEC23/SEC24 family. SEC24 subfamily.</text>
</comment>
<proteinExistence type="inferred from homology"/>
<accession>Q6FX11</accession>
<reference key="1">
    <citation type="journal article" date="2004" name="Nature">
        <title>Genome evolution in yeasts.</title>
        <authorList>
            <person name="Dujon B."/>
            <person name="Sherman D."/>
            <person name="Fischer G."/>
            <person name="Durrens P."/>
            <person name="Casaregola S."/>
            <person name="Lafontaine I."/>
            <person name="de Montigny J."/>
            <person name="Marck C."/>
            <person name="Neuveglise C."/>
            <person name="Talla E."/>
            <person name="Goffard N."/>
            <person name="Frangeul L."/>
            <person name="Aigle M."/>
            <person name="Anthouard V."/>
            <person name="Babour A."/>
            <person name="Barbe V."/>
            <person name="Barnay S."/>
            <person name="Blanchin S."/>
            <person name="Beckerich J.-M."/>
            <person name="Beyne E."/>
            <person name="Bleykasten C."/>
            <person name="Boisrame A."/>
            <person name="Boyer J."/>
            <person name="Cattolico L."/>
            <person name="Confanioleri F."/>
            <person name="de Daruvar A."/>
            <person name="Despons L."/>
            <person name="Fabre E."/>
            <person name="Fairhead C."/>
            <person name="Ferry-Dumazet H."/>
            <person name="Groppi A."/>
            <person name="Hantraye F."/>
            <person name="Hennequin C."/>
            <person name="Jauniaux N."/>
            <person name="Joyet P."/>
            <person name="Kachouri R."/>
            <person name="Kerrest A."/>
            <person name="Koszul R."/>
            <person name="Lemaire M."/>
            <person name="Lesur I."/>
            <person name="Ma L."/>
            <person name="Muller H."/>
            <person name="Nicaud J.-M."/>
            <person name="Nikolski M."/>
            <person name="Oztas S."/>
            <person name="Ozier-Kalogeropoulos O."/>
            <person name="Pellenz S."/>
            <person name="Potier S."/>
            <person name="Richard G.-F."/>
            <person name="Straub M.-L."/>
            <person name="Suleau A."/>
            <person name="Swennen D."/>
            <person name="Tekaia F."/>
            <person name="Wesolowski-Louvel M."/>
            <person name="Westhof E."/>
            <person name="Wirth B."/>
            <person name="Zeniou-Meyer M."/>
            <person name="Zivanovic Y."/>
            <person name="Bolotin-Fukuhara M."/>
            <person name="Thierry A."/>
            <person name="Bouchier C."/>
            <person name="Caudron B."/>
            <person name="Scarpelli C."/>
            <person name="Gaillardin C."/>
            <person name="Weissenbach J."/>
            <person name="Wincker P."/>
            <person name="Souciet J.-L."/>
        </authorList>
    </citation>
    <scope>NUCLEOTIDE SEQUENCE [LARGE SCALE GENOMIC DNA]</scope>
    <source>
        <strain>ATCC 2001 / BCRC 20586 / JCM 3761 / NBRC 0622 / NRRL Y-65 / CBS 138</strain>
    </source>
</reference>